<comment type="function">
    <text evidence="1">Required for the insertion and/or proper folding and/or complex formation of integral membrane proteins into the membrane. Involved in integration of membrane proteins that insert both dependently and independently of the Sec translocase complex, as well as at least some lipoproteins. Aids folding of multispanning membrane proteins.</text>
</comment>
<comment type="subunit">
    <text evidence="1">Interacts with the Sec translocase complex via SecD. Specifically interacts with transmembrane segments of nascent integral membrane proteins during membrane integration.</text>
</comment>
<comment type="subcellular location">
    <subcellularLocation>
        <location evidence="1">Cell inner membrane</location>
        <topology evidence="1">Multi-pass membrane protein</topology>
    </subcellularLocation>
</comment>
<comment type="similarity">
    <text evidence="1">Belongs to the OXA1/ALB3/YidC family. Type 1 subfamily.</text>
</comment>
<proteinExistence type="inferred from homology"/>
<organism>
    <name type="scientific">Maridesulfovibrio salexigens (strain ATCC 14822 / DSM 2638 / NCIMB 8403 / VKM B-1763)</name>
    <name type="common">Desulfovibrio salexigens</name>
    <dbReference type="NCBI Taxonomy" id="526222"/>
    <lineage>
        <taxon>Bacteria</taxon>
        <taxon>Pseudomonadati</taxon>
        <taxon>Thermodesulfobacteriota</taxon>
        <taxon>Desulfovibrionia</taxon>
        <taxon>Desulfovibrionales</taxon>
        <taxon>Desulfovibrionaceae</taxon>
        <taxon>Maridesulfovibrio</taxon>
    </lineage>
</organism>
<evidence type="ECO:0000255" key="1">
    <source>
        <dbReference type="HAMAP-Rule" id="MF_01810"/>
    </source>
</evidence>
<evidence type="ECO:0000256" key="2">
    <source>
        <dbReference type="SAM" id="MobiDB-lite"/>
    </source>
</evidence>
<reference key="1">
    <citation type="submission" date="2009-06" db="EMBL/GenBank/DDBJ databases">
        <title>Complete sequence of Desulfovibrio salexigens DSM 2638.</title>
        <authorList>
            <consortium name="US DOE Joint Genome Institute"/>
            <person name="Lucas S."/>
            <person name="Copeland A."/>
            <person name="Lapidus A."/>
            <person name="Glavina del Rio T."/>
            <person name="Tice H."/>
            <person name="Bruce D."/>
            <person name="Goodwin L."/>
            <person name="Pitluck S."/>
            <person name="Munk A.C."/>
            <person name="Brettin T."/>
            <person name="Detter J.C."/>
            <person name="Han C."/>
            <person name="Tapia R."/>
            <person name="Larimer F."/>
            <person name="Land M."/>
            <person name="Hauser L."/>
            <person name="Kyrpides N."/>
            <person name="Anderson I."/>
            <person name="Wall J.D."/>
            <person name="Arkin A.P."/>
            <person name="Dehal P."/>
            <person name="Chivian D."/>
            <person name="Giles B."/>
            <person name="Hazen T.C."/>
        </authorList>
    </citation>
    <scope>NUCLEOTIDE SEQUENCE [LARGE SCALE GENOMIC DNA]</scope>
    <source>
        <strain>ATCC 14822 / DSM 2638 / NCIMB 8403 / VKM B-1763</strain>
    </source>
</reference>
<protein>
    <recommendedName>
        <fullName evidence="1">Membrane protein insertase YidC</fullName>
    </recommendedName>
    <alternativeName>
        <fullName evidence="1">Foldase YidC</fullName>
    </alternativeName>
    <alternativeName>
        <fullName evidence="1">Membrane integrase YidC</fullName>
    </alternativeName>
    <alternativeName>
        <fullName evidence="1">Membrane protein YidC</fullName>
    </alternativeName>
</protein>
<gene>
    <name evidence="1" type="primary">yidC</name>
    <name type="ordered locus">Desal_1066</name>
</gene>
<keyword id="KW-0997">Cell inner membrane</keyword>
<keyword id="KW-1003">Cell membrane</keyword>
<keyword id="KW-0143">Chaperone</keyword>
<keyword id="KW-0472">Membrane</keyword>
<keyword id="KW-0653">Protein transport</keyword>
<keyword id="KW-1185">Reference proteome</keyword>
<keyword id="KW-0812">Transmembrane</keyword>
<keyword id="KW-1133">Transmembrane helix</keyword>
<keyword id="KW-0813">Transport</keyword>
<name>YIDC_MARSD</name>
<accession>C6C0J6</accession>
<feature type="chain" id="PRO_1000215964" description="Membrane protein insertase YidC">
    <location>
        <begin position="1"/>
        <end position="539"/>
    </location>
</feature>
<feature type="transmembrane region" description="Helical" evidence="1">
    <location>
        <begin position="6"/>
        <end position="26"/>
    </location>
</feature>
<feature type="transmembrane region" description="Helical" evidence="1">
    <location>
        <begin position="349"/>
        <end position="369"/>
    </location>
</feature>
<feature type="transmembrane region" description="Helical" evidence="1">
    <location>
        <begin position="421"/>
        <end position="441"/>
    </location>
</feature>
<feature type="transmembrane region" description="Helical" evidence="1">
    <location>
        <begin position="496"/>
        <end position="516"/>
    </location>
</feature>
<feature type="region of interest" description="Disordered" evidence="2">
    <location>
        <begin position="28"/>
        <end position="63"/>
    </location>
</feature>
<feature type="compositionally biased region" description="Low complexity" evidence="2">
    <location>
        <begin position="32"/>
        <end position="45"/>
    </location>
</feature>
<feature type="compositionally biased region" description="Polar residues" evidence="2">
    <location>
        <begin position="54"/>
        <end position="63"/>
    </location>
</feature>
<dbReference type="EMBL" id="CP001649">
    <property type="protein sequence ID" value="ACS79130.1"/>
    <property type="molecule type" value="Genomic_DNA"/>
</dbReference>
<dbReference type="RefSeq" id="WP_015850949.1">
    <property type="nucleotide sequence ID" value="NC_012881.1"/>
</dbReference>
<dbReference type="SMR" id="C6C0J6"/>
<dbReference type="STRING" id="526222.Desal_1066"/>
<dbReference type="KEGG" id="dsa:Desal_1066"/>
<dbReference type="eggNOG" id="COG0706">
    <property type="taxonomic scope" value="Bacteria"/>
</dbReference>
<dbReference type="HOGENOM" id="CLU_016535_3_0_7"/>
<dbReference type="OrthoDB" id="9780552at2"/>
<dbReference type="Proteomes" id="UP000002601">
    <property type="component" value="Chromosome"/>
</dbReference>
<dbReference type="GO" id="GO:0005886">
    <property type="term" value="C:plasma membrane"/>
    <property type="evidence" value="ECO:0007669"/>
    <property type="project" value="UniProtKB-SubCell"/>
</dbReference>
<dbReference type="GO" id="GO:0032977">
    <property type="term" value="F:membrane insertase activity"/>
    <property type="evidence" value="ECO:0007669"/>
    <property type="project" value="InterPro"/>
</dbReference>
<dbReference type="GO" id="GO:0051205">
    <property type="term" value="P:protein insertion into membrane"/>
    <property type="evidence" value="ECO:0007669"/>
    <property type="project" value="TreeGrafter"/>
</dbReference>
<dbReference type="GO" id="GO:0015031">
    <property type="term" value="P:protein transport"/>
    <property type="evidence" value="ECO:0007669"/>
    <property type="project" value="UniProtKB-KW"/>
</dbReference>
<dbReference type="CDD" id="cd20070">
    <property type="entry name" value="5TM_YidC_Alb3"/>
    <property type="match status" value="1"/>
</dbReference>
<dbReference type="CDD" id="cd19961">
    <property type="entry name" value="EcYidC-like_peri"/>
    <property type="match status" value="1"/>
</dbReference>
<dbReference type="Gene3D" id="2.70.98.90">
    <property type="match status" value="1"/>
</dbReference>
<dbReference type="HAMAP" id="MF_01810">
    <property type="entry name" value="YidC_type1"/>
    <property type="match status" value="1"/>
</dbReference>
<dbReference type="InterPro" id="IPR019998">
    <property type="entry name" value="Membr_insert_YidC"/>
</dbReference>
<dbReference type="InterPro" id="IPR028053">
    <property type="entry name" value="Membr_insert_YidC_N"/>
</dbReference>
<dbReference type="InterPro" id="IPR001708">
    <property type="entry name" value="YidC/ALB3/OXA1/COX18"/>
</dbReference>
<dbReference type="InterPro" id="IPR028055">
    <property type="entry name" value="YidC/Oxa/ALB_C"/>
</dbReference>
<dbReference type="InterPro" id="IPR047196">
    <property type="entry name" value="YidC_ALB_C"/>
</dbReference>
<dbReference type="InterPro" id="IPR038221">
    <property type="entry name" value="YidC_periplasmic_sf"/>
</dbReference>
<dbReference type="NCBIfam" id="TIGR03593">
    <property type="entry name" value="yidC_nterm"/>
    <property type="match status" value="1"/>
</dbReference>
<dbReference type="NCBIfam" id="TIGR03592">
    <property type="entry name" value="yidC_oxa1_cterm"/>
    <property type="match status" value="1"/>
</dbReference>
<dbReference type="PANTHER" id="PTHR12428:SF65">
    <property type="entry name" value="CYTOCHROME C OXIDASE ASSEMBLY PROTEIN COX18, MITOCHONDRIAL"/>
    <property type="match status" value="1"/>
</dbReference>
<dbReference type="PANTHER" id="PTHR12428">
    <property type="entry name" value="OXA1"/>
    <property type="match status" value="1"/>
</dbReference>
<dbReference type="Pfam" id="PF02096">
    <property type="entry name" value="60KD_IMP"/>
    <property type="match status" value="1"/>
</dbReference>
<dbReference type="Pfam" id="PF14849">
    <property type="entry name" value="YidC_periplas"/>
    <property type="match status" value="1"/>
</dbReference>
<dbReference type="PRINTS" id="PR00701">
    <property type="entry name" value="60KDINNERMP"/>
</dbReference>
<dbReference type="PRINTS" id="PR01900">
    <property type="entry name" value="YIDCPROTEIN"/>
</dbReference>
<sequence length="539" mass="60062">MDNKRVILAVALSFAVLLGWQFLFPPQPQQPAPAQQEQTAQPNQAVDSSVAGPVSNQLPDPASTSAIVSAKGTRLTVETPLYSAVINSQGGLLESFKLKKFKATIDADSPDVDMVGTNALDKAPMGLILNGIATWANGVWGYEGANLNLEGDKLGTLIFRGDVEGFRIERRLTFHADNYLIDEDVRVINKSNPSGMGRIAFTTATKSLTAADDRYNPTRIAWFNAEGLVEESDRDTLSETGVTESGKVEWAAIDSNYFILALVPGADSVTMKGKLQDDIFRIAAEQNVSFDKDIERKLACSYYFGPMDAQLMAKVPGELSKAIDFGWFDIIAKPLVVALEWFHQYTNNYGIAIILLTIVIKILFWPLSHKSYKSMEQMKRLQPMMAKLREKHGDDREALNKEMMQLYKTYNVNPAGGCLPMLLQIPVFFGLYKALMGTVALRHADFVHFLPFTDIVWLADLSAKDPLYITPIVMGATMFLQQKMTPSAGDPTQQKIMMFLPLVFTFMFLNFPSGLVVYWMVNNVLSIAQQWMMMRNVKN</sequence>